<keyword id="KW-0963">Cytoplasm</keyword>
<keyword id="KW-0520">NAD</keyword>
<keyword id="KW-0521">NADP</keyword>
<keyword id="KW-0560">Oxidoreductase</keyword>
<accession>Q1R543</accession>
<sequence length="324" mass="35396">MKPSVILYKALPDDLLQRLQEHFTVHQVANLSPQTVEQNAAIFAEAEGLLGSNENVDAALLEKMPKLRATSTISVGYDNFDVDALTARKILLMHTPTVLTETVADTLMALVLSTARRVVEVAERVKAGEWTASIGPDWYGTDVHHKTLGIVGMGRIGMALAQRAHFGFNMPILYNARRHHKEAEERFNARYCDLDTLLQESDFVCLILPLTDETHHLFGAEQFAKMKSSAIFINAGRGPVVDENALIAALQKGEIHAAGLDVFEQEPLSVDSPLLSMANVVAVPHIGSATHETRYGMAACAVDNLIDALQGKVEKNCVNPHVAD</sequence>
<reference key="1">
    <citation type="journal article" date="2006" name="Proc. Natl. Acad. Sci. U.S.A.">
        <title>Identification of genes subject to positive selection in uropathogenic strains of Escherichia coli: a comparative genomics approach.</title>
        <authorList>
            <person name="Chen S.L."/>
            <person name="Hung C.-S."/>
            <person name="Xu J."/>
            <person name="Reigstad C.S."/>
            <person name="Magrini V."/>
            <person name="Sabo A."/>
            <person name="Blasiar D."/>
            <person name="Bieri T."/>
            <person name="Meyer R.R."/>
            <person name="Ozersky P."/>
            <person name="Armstrong J.R."/>
            <person name="Fulton R.S."/>
            <person name="Latreille J.P."/>
            <person name="Spieth J."/>
            <person name="Hooton T.M."/>
            <person name="Mardis E.R."/>
            <person name="Hultgren S.J."/>
            <person name="Gordon J.I."/>
        </authorList>
    </citation>
    <scope>NUCLEOTIDE SEQUENCE [LARGE SCALE GENOMIC DNA]</scope>
    <source>
        <strain>UTI89 / UPEC</strain>
    </source>
</reference>
<organism>
    <name type="scientific">Escherichia coli (strain UTI89 / UPEC)</name>
    <dbReference type="NCBI Taxonomy" id="364106"/>
    <lineage>
        <taxon>Bacteria</taxon>
        <taxon>Pseudomonadati</taxon>
        <taxon>Pseudomonadota</taxon>
        <taxon>Gammaproteobacteria</taxon>
        <taxon>Enterobacterales</taxon>
        <taxon>Enterobacteriaceae</taxon>
        <taxon>Escherichia</taxon>
    </lineage>
</organism>
<comment type="function">
    <text evidence="1">Catalyzes the NADPH-dependent reduction of glyoxylate and hydroxypyruvate into glycolate and glycerate, respectively.</text>
</comment>
<comment type="catalytic activity">
    <reaction evidence="1">
        <text>glycolate + NADP(+) = glyoxylate + NADPH + H(+)</text>
        <dbReference type="Rhea" id="RHEA:10992"/>
        <dbReference type="ChEBI" id="CHEBI:15378"/>
        <dbReference type="ChEBI" id="CHEBI:29805"/>
        <dbReference type="ChEBI" id="CHEBI:36655"/>
        <dbReference type="ChEBI" id="CHEBI:57783"/>
        <dbReference type="ChEBI" id="CHEBI:58349"/>
        <dbReference type="EC" id="1.1.1.79"/>
    </reaction>
</comment>
<comment type="catalytic activity">
    <reaction evidence="1">
        <text>(R)-glycerate + NAD(+) = 3-hydroxypyruvate + NADH + H(+)</text>
        <dbReference type="Rhea" id="RHEA:17905"/>
        <dbReference type="ChEBI" id="CHEBI:15378"/>
        <dbReference type="ChEBI" id="CHEBI:16659"/>
        <dbReference type="ChEBI" id="CHEBI:17180"/>
        <dbReference type="ChEBI" id="CHEBI:57540"/>
        <dbReference type="ChEBI" id="CHEBI:57945"/>
        <dbReference type="EC" id="1.1.1.81"/>
    </reaction>
</comment>
<comment type="catalytic activity">
    <reaction evidence="1">
        <text>(R)-glycerate + NADP(+) = 3-hydroxypyruvate + NADPH + H(+)</text>
        <dbReference type="Rhea" id="RHEA:18657"/>
        <dbReference type="ChEBI" id="CHEBI:15378"/>
        <dbReference type="ChEBI" id="CHEBI:16659"/>
        <dbReference type="ChEBI" id="CHEBI:17180"/>
        <dbReference type="ChEBI" id="CHEBI:57783"/>
        <dbReference type="ChEBI" id="CHEBI:58349"/>
        <dbReference type="EC" id="1.1.1.81"/>
    </reaction>
</comment>
<comment type="subunit">
    <text evidence="1">Homodimer.</text>
</comment>
<comment type="subcellular location">
    <subcellularLocation>
        <location evidence="1">Cytoplasm</location>
    </subcellularLocation>
</comment>
<comment type="similarity">
    <text evidence="1">Belongs to the D-isomer specific 2-hydroxyacid dehydrogenase family. GhrB subfamily.</text>
</comment>
<comment type="sequence caution" evidence="2">
    <conflict type="erroneous initiation">
        <sequence resource="EMBL-CDS" id="ABE09521"/>
    </conflict>
</comment>
<name>GHRB_ECOUT</name>
<evidence type="ECO:0000255" key="1">
    <source>
        <dbReference type="HAMAP-Rule" id="MF_01667"/>
    </source>
</evidence>
<evidence type="ECO:0000305" key="2"/>
<protein>
    <recommendedName>
        <fullName evidence="1">Glyoxylate/hydroxypyruvate reductase B</fullName>
        <ecNumber evidence="1">1.1.1.79</ecNumber>
        <ecNumber evidence="1">1.1.1.81</ecNumber>
    </recommendedName>
</protein>
<feature type="chain" id="PRO_0000348386" description="Glyoxylate/hydroxypyruvate reductase B">
    <location>
        <begin position="1"/>
        <end position="324"/>
    </location>
</feature>
<feature type="active site" evidence="1">
    <location>
        <position position="237"/>
    </location>
</feature>
<feature type="active site" evidence="1">
    <location>
        <position position="266"/>
    </location>
</feature>
<feature type="active site" description="Proton donor" evidence="1">
    <location>
        <position position="285"/>
    </location>
</feature>
<proteinExistence type="inferred from homology"/>
<gene>
    <name evidence="1" type="primary">ghrB</name>
    <name type="ordered locus">UTI89_C4093</name>
</gene>
<dbReference type="EC" id="1.1.1.79" evidence="1"/>
<dbReference type="EC" id="1.1.1.81" evidence="1"/>
<dbReference type="EMBL" id="CP000243">
    <property type="protein sequence ID" value="ABE09521.1"/>
    <property type="status" value="ALT_INIT"/>
    <property type="molecule type" value="Genomic_DNA"/>
</dbReference>
<dbReference type="RefSeq" id="WP_000805027.1">
    <property type="nucleotide sequence ID" value="NZ_CP064825.1"/>
</dbReference>
<dbReference type="SMR" id="Q1R543"/>
<dbReference type="GeneID" id="75203026"/>
<dbReference type="KEGG" id="eci:UTI89_C4093"/>
<dbReference type="HOGENOM" id="CLU_019796_1_2_6"/>
<dbReference type="Proteomes" id="UP000001952">
    <property type="component" value="Chromosome"/>
</dbReference>
<dbReference type="GO" id="GO:0005829">
    <property type="term" value="C:cytosol"/>
    <property type="evidence" value="ECO:0007669"/>
    <property type="project" value="TreeGrafter"/>
</dbReference>
<dbReference type="GO" id="GO:0005886">
    <property type="term" value="C:plasma membrane"/>
    <property type="evidence" value="ECO:0007669"/>
    <property type="project" value="UniProtKB-UniRule"/>
</dbReference>
<dbReference type="GO" id="GO:0030267">
    <property type="term" value="F:glyoxylate reductase (NADPH) activity"/>
    <property type="evidence" value="ECO:0007669"/>
    <property type="project" value="UniProtKB-UniRule"/>
</dbReference>
<dbReference type="GO" id="GO:0008465">
    <property type="term" value="F:hydroxypyruvate reductase (NADH) activity"/>
    <property type="evidence" value="ECO:0007669"/>
    <property type="project" value="RHEA"/>
</dbReference>
<dbReference type="GO" id="GO:0120509">
    <property type="term" value="F:hydroxypyruvate reductase (NADPH) activity"/>
    <property type="evidence" value="ECO:0007669"/>
    <property type="project" value="RHEA"/>
</dbReference>
<dbReference type="GO" id="GO:0051287">
    <property type="term" value="F:NAD binding"/>
    <property type="evidence" value="ECO:0007669"/>
    <property type="project" value="InterPro"/>
</dbReference>
<dbReference type="CDD" id="cd05301">
    <property type="entry name" value="GDH"/>
    <property type="match status" value="1"/>
</dbReference>
<dbReference type="FunFam" id="3.40.50.720:FF:000026">
    <property type="entry name" value="Glyoxylate/hydroxypyruvate reductase B"/>
    <property type="match status" value="1"/>
</dbReference>
<dbReference type="Gene3D" id="3.40.50.720">
    <property type="entry name" value="NAD(P)-binding Rossmann-like Domain"/>
    <property type="match status" value="2"/>
</dbReference>
<dbReference type="HAMAP" id="MF_01667">
    <property type="entry name" value="2_Hacid_dh_C_GhrB"/>
    <property type="match status" value="1"/>
</dbReference>
<dbReference type="InterPro" id="IPR050223">
    <property type="entry name" value="D-isomer_2-hydroxyacid_DH"/>
</dbReference>
<dbReference type="InterPro" id="IPR006139">
    <property type="entry name" value="D-isomer_2_OHA_DH_cat_dom"/>
</dbReference>
<dbReference type="InterPro" id="IPR029753">
    <property type="entry name" value="D-isomer_DH_CS"/>
</dbReference>
<dbReference type="InterPro" id="IPR006140">
    <property type="entry name" value="D-isomer_DH_NAD-bd"/>
</dbReference>
<dbReference type="InterPro" id="IPR023756">
    <property type="entry name" value="Glyo/OHPyrv_Rdtase_B"/>
</dbReference>
<dbReference type="InterPro" id="IPR036291">
    <property type="entry name" value="NAD(P)-bd_dom_sf"/>
</dbReference>
<dbReference type="NCBIfam" id="NF011938">
    <property type="entry name" value="PRK15409.1"/>
    <property type="match status" value="1"/>
</dbReference>
<dbReference type="PANTHER" id="PTHR10996">
    <property type="entry name" value="2-HYDROXYACID DEHYDROGENASE-RELATED"/>
    <property type="match status" value="1"/>
</dbReference>
<dbReference type="PANTHER" id="PTHR10996:SF283">
    <property type="entry name" value="GLYOXYLATE_HYDROXYPYRUVATE REDUCTASE B"/>
    <property type="match status" value="1"/>
</dbReference>
<dbReference type="Pfam" id="PF00389">
    <property type="entry name" value="2-Hacid_dh"/>
    <property type="match status" value="1"/>
</dbReference>
<dbReference type="Pfam" id="PF02826">
    <property type="entry name" value="2-Hacid_dh_C"/>
    <property type="match status" value="1"/>
</dbReference>
<dbReference type="SUPFAM" id="SSF52283">
    <property type="entry name" value="Formate/glycerate dehydrogenase catalytic domain-like"/>
    <property type="match status" value="1"/>
</dbReference>
<dbReference type="SUPFAM" id="SSF51735">
    <property type="entry name" value="NAD(P)-binding Rossmann-fold domains"/>
    <property type="match status" value="1"/>
</dbReference>
<dbReference type="PROSITE" id="PS00670">
    <property type="entry name" value="D_2_HYDROXYACID_DH_2"/>
    <property type="match status" value="1"/>
</dbReference>
<dbReference type="PROSITE" id="PS00671">
    <property type="entry name" value="D_2_HYDROXYACID_DH_3"/>
    <property type="match status" value="1"/>
</dbReference>